<accession>B5RL82</accession>
<organism>
    <name type="scientific">Borrelia duttonii (strain Ly)</name>
    <dbReference type="NCBI Taxonomy" id="412419"/>
    <lineage>
        <taxon>Bacteria</taxon>
        <taxon>Pseudomonadati</taxon>
        <taxon>Spirochaetota</taxon>
        <taxon>Spirochaetia</taxon>
        <taxon>Spirochaetales</taxon>
        <taxon>Borreliaceae</taxon>
        <taxon>Borrelia</taxon>
    </lineage>
</organism>
<evidence type="ECO:0000255" key="1">
    <source>
        <dbReference type="HAMAP-Rule" id="MF_00358"/>
    </source>
</evidence>
<evidence type="ECO:0000305" key="2"/>
<comment type="similarity">
    <text evidence="1">Belongs to the bacterial ribosomal protein bS21 family.</text>
</comment>
<keyword id="KW-0687">Ribonucleoprotein</keyword>
<keyword id="KW-0689">Ribosomal protein</keyword>
<sequence>MVTVNVDKNEGLEKALKRFKRMIEKEAIIREWKRREYYEKPSTIRVKKEKAFKRKQAKKVRKLKQKIGK</sequence>
<name>RS21_BORDL</name>
<protein>
    <recommendedName>
        <fullName evidence="1">Small ribosomal subunit protein bS21</fullName>
    </recommendedName>
    <alternativeName>
        <fullName evidence="2">30S ribosomal protein S21</fullName>
    </alternativeName>
</protein>
<proteinExistence type="inferred from homology"/>
<dbReference type="EMBL" id="CP000976">
    <property type="protein sequence ID" value="ACH93211.1"/>
    <property type="molecule type" value="Genomic_DNA"/>
</dbReference>
<dbReference type="RefSeq" id="WP_012422030.1">
    <property type="nucleotide sequence ID" value="NC_011229.1"/>
</dbReference>
<dbReference type="SMR" id="B5RL82"/>
<dbReference type="STRING" id="412419.BDU_259"/>
<dbReference type="GeneID" id="71843070"/>
<dbReference type="KEGG" id="bdu:BDU_259"/>
<dbReference type="eggNOG" id="COG0828">
    <property type="taxonomic scope" value="Bacteria"/>
</dbReference>
<dbReference type="HOGENOM" id="CLU_159258_1_2_12"/>
<dbReference type="OrthoDB" id="9799244at2"/>
<dbReference type="Proteomes" id="UP000000611">
    <property type="component" value="Chromosome"/>
</dbReference>
<dbReference type="GO" id="GO:1990904">
    <property type="term" value="C:ribonucleoprotein complex"/>
    <property type="evidence" value="ECO:0007669"/>
    <property type="project" value="UniProtKB-KW"/>
</dbReference>
<dbReference type="GO" id="GO:0005840">
    <property type="term" value="C:ribosome"/>
    <property type="evidence" value="ECO:0007669"/>
    <property type="project" value="UniProtKB-KW"/>
</dbReference>
<dbReference type="GO" id="GO:0003735">
    <property type="term" value="F:structural constituent of ribosome"/>
    <property type="evidence" value="ECO:0007669"/>
    <property type="project" value="InterPro"/>
</dbReference>
<dbReference type="GO" id="GO:0006412">
    <property type="term" value="P:translation"/>
    <property type="evidence" value="ECO:0007669"/>
    <property type="project" value="UniProtKB-UniRule"/>
</dbReference>
<dbReference type="Gene3D" id="1.20.5.1150">
    <property type="entry name" value="Ribosomal protein S8"/>
    <property type="match status" value="1"/>
</dbReference>
<dbReference type="HAMAP" id="MF_00358">
    <property type="entry name" value="Ribosomal_bS21"/>
    <property type="match status" value="1"/>
</dbReference>
<dbReference type="InterPro" id="IPR001911">
    <property type="entry name" value="Ribosomal_bS21"/>
</dbReference>
<dbReference type="InterPro" id="IPR018278">
    <property type="entry name" value="Ribosomal_bS21_CS"/>
</dbReference>
<dbReference type="InterPro" id="IPR038380">
    <property type="entry name" value="Ribosomal_bS21_sf"/>
</dbReference>
<dbReference type="NCBIfam" id="TIGR00030">
    <property type="entry name" value="S21p"/>
    <property type="match status" value="1"/>
</dbReference>
<dbReference type="PANTHER" id="PTHR21109">
    <property type="entry name" value="MITOCHONDRIAL 28S RIBOSOMAL PROTEIN S21"/>
    <property type="match status" value="1"/>
</dbReference>
<dbReference type="PANTHER" id="PTHR21109:SF22">
    <property type="entry name" value="SMALL RIBOSOMAL SUBUNIT PROTEIN BS21"/>
    <property type="match status" value="1"/>
</dbReference>
<dbReference type="Pfam" id="PF01165">
    <property type="entry name" value="Ribosomal_S21"/>
    <property type="match status" value="1"/>
</dbReference>
<dbReference type="PRINTS" id="PR00976">
    <property type="entry name" value="RIBOSOMALS21"/>
</dbReference>
<dbReference type="PROSITE" id="PS01181">
    <property type="entry name" value="RIBOSOMAL_S21"/>
    <property type="match status" value="1"/>
</dbReference>
<feature type="chain" id="PRO_1000120591" description="Small ribosomal subunit protein bS21">
    <location>
        <begin position="1"/>
        <end position="69"/>
    </location>
</feature>
<gene>
    <name evidence="1" type="primary">rpsU</name>
    <name type="ordered locus">BDU_259</name>
</gene>
<reference key="1">
    <citation type="journal article" date="2008" name="PLoS Genet.">
        <title>The genome of Borrelia recurrentis, the agent of deadly louse-borne relapsing fever, is a degraded subset of tick-borne Borrelia duttonii.</title>
        <authorList>
            <person name="Lescot M."/>
            <person name="Audic S."/>
            <person name="Robert C."/>
            <person name="Nguyen T.T."/>
            <person name="Blanc G."/>
            <person name="Cutler S.J."/>
            <person name="Wincker P."/>
            <person name="Couloux A."/>
            <person name="Claverie J.-M."/>
            <person name="Raoult D."/>
            <person name="Drancourt M."/>
        </authorList>
    </citation>
    <scope>NUCLEOTIDE SEQUENCE [LARGE SCALE GENOMIC DNA]</scope>
    <source>
        <strain>Ly</strain>
    </source>
</reference>